<reference key="1">
    <citation type="journal article" date="2007" name="Mol. Phylogenet. Evol.">
        <title>Phylogenetic and evolutionary implications of complete chloroplast genome sequences of four early-diverging angiosperms: Buxus (Buxaceae), Chloranthus (Chloranthaceae), Dioscorea (Dioscoreaceae), and Illicium (Schisandraceae).</title>
        <authorList>
            <person name="Hansen D.R."/>
            <person name="Dastidar S.G."/>
            <person name="Cai Z."/>
            <person name="Penaflor C."/>
            <person name="Kuehl J.V."/>
            <person name="Boore J.L."/>
            <person name="Jansen R.K."/>
        </authorList>
    </citation>
    <scope>NUCLEOTIDE SEQUENCE [LARGE SCALE GENOMIC DNA]</scope>
</reference>
<keyword id="KW-0066">ATP synthesis</keyword>
<keyword id="KW-0067">ATP-binding</keyword>
<keyword id="KW-0139">CF(1)</keyword>
<keyword id="KW-0150">Chloroplast</keyword>
<keyword id="KW-0375">Hydrogen ion transport</keyword>
<keyword id="KW-0406">Ion transport</keyword>
<keyword id="KW-0472">Membrane</keyword>
<keyword id="KW-0547">Nucleotide-binding</keyword>
<keyword id="KW-0934">Plastid</keyword>
<keyword id="KW-0793">Thylakoid</keyword>
<keyword id="KW-1278">Translocase</keyword>
<keyword id="KW-0813">Transport</keyword>
<dbReference type="EC" id="7.1.2.2" evidence="1"/>
<dbReference type="EMBL" id="EF380354">
    <property type="protein sequence ID" value="ABQ52504.1"/>
    <property type="molecule type" value="Genomic_DNA"/>
</dbReference>
<dbReference type="RefSeq" id="YP_001294255.1">
    <property type="nucleotide sequence ID" value="NC_009600.1"/>
</dbReference>
<dbReference type="SMR" id="A6MMS9"/>
<dbReference type="GeneID" id="5236703"/>
<dbReference type="GO" id="GO:0009535">
    <property type="term" value="C:chloroplast thylakoid membrane"/>
    <property type="evidence" value="ECO:0007669"/>
    <property type="project" value="UniProtKB-SubCell"/>
</dbReference>
<dbReference type="GO" id="GO:0045259">
    <property type="term" value="C:proton-transporting ATP synthase complex"/>
    <property type="evidence" value="ECO:0007669"/>
    <property type="project" value="UniProtKB-KW"/>
</dbReference>
<dbReference type="GO" id="GO:0043531">
    <property type="term" value="F:ADP binding"/>
    <property type="evidence" value="ECO:0007669"/>
    <property type="project" value="TreeGrafter"/>
</dbReference>
<dbReference type="GO" id="GO:0005524">
    <property type="term" value="F:ATP binding"/>
    <property type="evidence" value="ECO:0007669"/>
    <property type="project" value="UniProtKB-UniRule"/>
</dbReference>
<dbReference type="GO" id="GO:0046933">
    <property type="term" value="F:proton-transporting ATP synthase activity, rotational mechanism"/>
    <property type="evidence" value="ECO:0007669"/>
    <property type="project" value="UniProtKB-UniRule"/>
</dbReference>
<dbReference type="CDD" id="cd18113">
    <property type="entry name" value="ATP-synt_F1_alpha_C"/>
    <property type="match status" value="1"/>
</dbReference>
<dbReference type="CDD" id="cd18116">
    <property type="entry name" value="ATP-synt_F1_alpha_N"/>
    <property type="match status" value="1"/>
</dbReference>
<dbReference type="CDD" id="cd01132">
    <property type="entry name" value="F1-ATPase_alpha_CD"/>
    <property type="match status" value="1"/>
</dbReference>
<dbReference type="FunFam" id="1.20.150.20:FF:000001">
    <property type="entry name" value="ATP synthase subunit alpha"/>
    <property type="match status" value="1"/>
</dbReference>
<dbReference type="FunFam" id="2.40.30.20:FF:000001">
    <property type="entry name" value="ATP synthase subunit alpha"/>
    <property type="match status" value="1"/>
</dbReference>
<dbReference type="FunFam" id="3.40.50.300:FF:000002">
    <property type="entry name" value="ATP synthase subunit alpha"/>
    <property type="match status" value="1"/>
</dbReference>
<dbReference type="Gene3D" id="2.40.30.20">
    <property type="match status" value="1"/>
</dbReference>
<dbReference type="Gene3D" id="1.20.150.20">
    <property type="entry name" value="ATP synthase alpha/beta chain, C-terminal domain"/>
    <property type="match status" value="1"/>
</dbReference>
<dbReference type="Gene3D" id="3.40.50.300">
    <property type="entry name" value="P-loop containing nucleotide triphosphate hydrolases"/>
    <property type="match status" value="1"/>
</dbReference>
<dbReference type="HAMAP" id="MF_01346">
    <property type="entry name" value="ATP_synth_alpha_bact"/>
    <property type="match status" value="1"/>
</dbReference>
<dbReference type="InterPro" id="IPR023366">
    <property type="entry name" value="ATP_synth_asu-like_sf"/>
</dbReference>
<dbReference type="InterPro" id="IPR000793">
    <property type="entry name" value="ATP_synth_asu_C"/>
</dbReference>
<dbReference type="InterPro" id="IPR038376">
    <property type="entry name" value="ATP_synth_asu_C_sf"/>
</dbReference>
<dbReference type="InterPro" id="IPR033732">
    <property type="entry name" value="ATP_synth_F1_a_nt-bd_dom"/>
</dbReference>
<dbReference type="InterPro" id="IPR005294">
    <property type="entry name" value="ATP_synth_F1_asu"/>
</dbReference>
<dbReference type="InterPro" id="IPR020003">
    <property type="entry name" value="ATPase_a/bsu_AS"/>
</dbReference>
<dbReference type="InterPro" id="IPR004100">
    <property type="entry name" value="ATPase_F1/V1/A1_a/bsu_N"/>
</dbReference>
<dbReference type="InterPro" id="IPR036121">
    <property type="entry name" value="ATPase_F1/V1/A1_a/bsu_N_sf"/>
</dbReference>
<dbReference type="InterPro" id="IPR000194">
    <property type="entry name" value="ATPase_F1/V1/A1_a/bsu_nucl-bd"/>
</dbReference>
<dbReference type="InterPro" id="IPR027417">
    <property type="entry name" value="P-loop_NTPase"/>
</dbReference>
<dbReference type="NCBIfam" id="TIGR00962">
    <property type="entry name" value="atpA"/>
    <property type="match status" value="1"/>
</dbReference>
<dbReference type="NCBIfam" id="NF009884">
    <property type="entry name" value="PRK13343.1"/>
    <property type="match status" value="1"/>
</dbReference>
<dbReference type="PANTHER" id="PTHR48082">
    <property type="entry name" value="ATP SYNTHASE SUBUNIT ALPHA, MITOCHONDRIAL"/>
    <property type="match status" value="1"/>
</dbReference>
<dbReference type="PANTHER" id="PTHR48082:SF2">
    <property type="entry name" value="ATP SYNTHASE SUBUNIT ALPHA, MITOCHONDRIAL"/>
    <property type="match status" value="1"/>
</dbReference>
<dbReference type="Pfam" id="PF00006">
    <property type="entry name" value="ATP-synt_ab"/>
    <property type="match status" value="1"/>
</dbReference>
<dbReference type="Pfam" id="PF00306">
    <property type="entry name" value="ATP-synt_ab_C"/>
    <property type="match status" value="1"/>
</dbReference>
<dbReference type="Pfam" id="PF02874">
    <property type="entry name" value="ATP-synt_ab_N"/>
    <property type="match status" value="1"/>
</dbReference>
<dbReference type="PIRSF" id="PIRSF039088">
    <property type="entry name" value="F_ATPase_subunit_alpha"/>
    <property type="match status" value="1"/>
</dbReference>
<dbReference type="SUPFAM" id="SSF47917">
    <property type="entry name" value="C-terminal domain of alpha and beta subunits of F1 ATP synthase"/>
    <property type="match status" value="1"/>
</dbReference>
<dbReference type="SUPFAM" id="SSF50615">
    <property type="entry name" value="N-terminal domain of alpha and beta subunits of F1 ATP synthase"/>
    <property type="match status" value="1"/>
</dbReference>
<dbReference type="SUPFAM" id="SSF52540">
    <property type="entry name" value="P-loop containing nucleoside triphosphate hydrolases"/>
    <property type="match status" value="1"/>
</dbReference>
<dbReference type="PROSITE" id="PS00152">
    <property type="entry name" value="ATPASE_ALPHA_BETA"/>
    <property type="match status" value="1"/>
</dbReference>
<comment type="function">
    <text evidence="1">Produces ATP from ADP in the presence of a proton gradient across the membrane. The alpha chain is a regulatory subunit.</text>
</comment>
<comment type="catalytic activity">
    <reaction evidence="1">
        <text>ATP + H2O + 4 H(+)(in) = ADP + phosphate + 5 H(+)(out)</text>
        <dbReference type="Rhea" id="RHEA:57720"/>
        <dbReference type="ChEBI" id="CHEBI:15377"/>
        <dbReference type="ChEBI" id="CHEBI:15378"/>
        <dbReference type="ChEBI" id="CHEBI:30616"/>
        <dbReference type="ChEBI" id="CHEBI:43474"/>
        <dbReference type="ChEBI" id="CHEBI:456216"/>
        <dbReference type="EC" id="7.1.2.2"/>
    </reaction>
</comment>
<comment type="subunit">
    <text evidence="1">F-type ATPases have 2 components, CF(1) - the catalytic core - and CF(0) - the membrane proton channel. CF(1) has five subunits: alpha(3), beta(3), gamma(1), delta(1), epsilon(1). CF(0) has four main subunits: a, b, b' and c.</text>
</comment>
<comment type="subcellular location">
    <subcellularLocation>
        <location evidence="1">Plastid</location>
        <location evidence="1">Chloroplast thylakoid membrane</location>
        <topology evidence="1">Peripheral membrane protein</topology>
    </subcellularLocation>
</comment>
<comment type="similarity">
    <text evidence="1">Belongs to the ATPase alpha/beta chains family.</text>
</comment>
<feature type="chain" id="PRO_0000339089" description="ATP synthase subunit alpha, chloroplastic">
    <location>
        <begin position="1"/>
        <end position="507"/>
    </location>
</feature>
<feature type="binding site" evidence="1">
    <location>
        <begin position="170"/>
        <end position="177"/>
    </location>
    <ligand>
        <name>ATP</name>
        <dbReference type="ChEBI" id="CHEBI:30616"/>
    </ligand>
</feature>
<feature type="site" description="Required for activity" evidence="1">
    <location>
        <position position="363"/>
    </location>
</feature>
<accession>A6MMS9</accession>
<organism>
    <name type="scientific">Illicium oligandrum</name>
    <name type="common">Star anise</name>
    <dbReference type="NCBI Taxonomy" id="145286"/>
    <lineage>
        <taxon>Eukaryota</taxon>
        <taxon>Viridiplantae</taxon>
        <taxon>Streptophyta</taxon>
        <taxon>Embryophyta</taxon>
        <taxon>Tracheophyta</taxon>
        <taxon>Spermatophyta</taxon>
        <taxon>Magnoliopsida</taxon>
        <taxon>Austrobaileyales</taxon>
        <taxon>Schisandraceae</taxon>
        <taxon>Illicium</taxon>
    </lineage>
</organism>
<name>ATPA_ILLOL</name>
<geneLocation type="chloroplast"/>
<protein>
    <recommendedName>
        <fullName evidence="1">ATP synthase subunit alpha, chloroplastic</fullName>
        <ecNumber evidence="1">7.1.2.2</ecNumber>
    </recommendedName>
    <alternativeName>
        <fullName evidence="1">ATP synthase F1 sector subunit alpha</fullName>
    </alternativeName>
    <alternativeName>
        <fullName evidence="1">F-ATPase subunit alpha</fullName>
    </alternativeName>
</protein>
<gene>
    <name evidence="1" type="primary">atpA</name>
</gene>
<evidence type="ECO:0000255" key="1">
    <source>
        <dbReference type="HAMAP-Rule" id="MF_01346"/>
    </source>
</evidence>
<sequence length="507" mass="55380">MVTIRADEISNIIRERIEQYNREVKIVNTGTVLQVGDGIARIHGLDEVMAGELVEFEEGTIGIAPNSESNNVGVVLMGDGLMIQEGSSVKATGRIAQIPVSEAYLGRVINALAKPIDGRGEISASESRLIESPAPGIISRRSVYEPLQTGLIAIDSMIPIGRGQRELIIGDRQTGKTAVATDTILNQKGQNVICVYVAIGQKASSVAQVVTTFQERGAMEYTIVVAETADSPATLQYLAPYTGAALAEYFMYRERHTLIIYDDPSKQAQAYRQMSLLLRRPPGREAYPGDVFYLHSRLLERAAKSSSRLGEGSMTALPIVETQSGDVSAYIPTNVISITDGQIFLSADLFNAGIRPAINVGISVSRVGSAAQIKAMKQVAGKSKLELAQFAELEAFAQFASDLDKATQNQLARGQRLRELLKQSQSAPFTVEEQIVTIYTGANGYLDLLEIGQVKKFLVQLRTHLRTNKPQFQEIICSTRTFTEQAEALLKEAIQEQIELFLLQEQA</sequence>
<proteinExistence type="inferred from homology"/>